<reference key="1">
    <citation type="journal article" date="2005" name="Science">
        <title>The transcriptional landscape of the mammalian genome.</title>
        <authorList>
            <person name="Carninci P."/>
            <person name="Kasukawa T."/>
            <person name="Katayama S."/>
            <person name="Gough J."/>
            <person name="Frith M.C."/>
            <person name="Maeda N."/>
            <person name="Oyama R."/>
            <person name="Ravasi T."/>
            <person name="Lenhard B."/>
            <person name="Wells C."/>
            <person name="Kodzius R."/>
            <person name="Shimokawa K."/>
            <person name="Bajic V.B."/>
            <person name="Brenner S.E."/>
            <person name="Batalov S."/>
            <person name="Forrest A.R."/>
            <person name="Zavolan M."/>
            <person name="Davis M.J."/>
            <person name="Wilming L.G."/>
            <person name="Aidinis V."/>
            <person name="Allen J.E."/>
            <person name="Ambesi-Impiombato A."/>
            <person name="Apweiler R."/>
            <person name="Aturaliya R.N."/>
            <person name="Bailey T.L."/>
            <person name="Bansal M."/>
            <person name="Baxter L."/>
            <person name="Beisel K.W."/>
            <person name="Bersano T."/>
            <person name="Bono H."/>
            <person name="Chalk A.M."/>
            <person name="Chiu K.P."/>
            <person name="Choudhary V."/>
            <person name="Christoffels A."/>
            <person name="Clutterbuck D.R."/>
            <person name="Crowe M.L."/>
            <person name="Dalla E."/>
            <person name="Dalrymple B.P."/>
            <person name="de Bono B."/>
            <person name="Della Gatta G."/>
            <person name="di Bernardo D."/>
            <person name="Down T."/>
            <person name="Engstrom P."/>
            <person name="Fagiolini M."/>
            <person name="Faulkner G."/>
            <person name="Fletcher C.F."/>
            <person name="Fukushima T."/>
            <person name="Furuno M."/>
            <person name="Futaki S."/>
            <person name="Gariboldi M."/>
            <person name="Georgii-Hemming P."/>
            <person name="Gingeras T.R."/>
            <person name="Gojobori T."/>
            <person name="Green R.E."/>
            <person name="Gustincich S."/>
            <person name="Harbers M."/>
            <person name="Hayashi Y."/>
            <person name="Hensch T.K."/>
            <person name="Hirokawa N."/>
            <person name="Hill D."/>
            <person name="Huminiecki L."/>
            <person name="Iacono M."/>
            <person name="Ikeo K."/>
            <person name="Iwama A."/>
            <person name="Ishikawa T."/>
            <person name="Jakt M."/>
            <person name="Kanapin A."/>
            <person name="Katoh M."/>
            <person name="Kawasawa Y."/>
            <person name="Kelso J."/>
            <person name="Kitamura H."/>
            <person name="Kitano H."/>
            <person name="Kollias G."/>
            <person name="Krishnan S.P."/>
            <person name="Kruger A."/>
            <person name="Kummerfeld S.K."/>
            <person name="Kurochkin I.V."/>
            <person name="Lareau L.F."/>
            <person name="Lazarevic D."/>
            <person name="Lipovich L."/>
            <person name="Liu J."/>
            <person name="Liuni S."/>
            <person name="McWilliam S."/>
            <person name="Madan Babu M."/>
            <person name="Madera M."/>
            <person name="Marchionni L."/>
            <person name="Matsuda H."/>
            <person name="Matsuzawa S."/>
            <person name="Miki H."/>
            <person name="Mignone F."/>
            <person name="Miyake S."/>
            <person name="Morris K."/>
            <person name="Mottagui-Tabar S."/>
            <person name="Mulder N."/>
            <person name="Nakano N."/>
            <person name="Nakauchi H."/>
            <person name="Ng P."/>
            <person name="Nilsson R."/>
            <person name="Nishiguchi S."/>
            <person name="Nishikawa S."/>
            <person name="Nori F."/>
            <person name="Ohara O."/>
            <person name="Okazaki Y."/>
            <person name="Orlando V."/>
            <person name="Pang K.C."/>
            <person name="Pavan W.J."/>
            <person name="Pavesi G."/>
            <person name="Pesole G."/>
            <person name="Petrovsky N."/>
            <person name="Piazza S."/>
            <person name="Reed J."/>
            <person name="Reid J.F."/>
            <person name="Ring B.Z."/>
            <person name="Ringwald M."/>
            <person name="Rost B."/>
            <person name="Ruan Y."/>
            <person name="Salzberg S.L."/>
            <person name="Sandelin A."/>
            <person name="Schneider C."/>
            <person name="Schoenbach C."/>
            <person name="Sekiguchi K."/>
            <person name="Semple C.A."/>
            <person name="Seno S."/>
            <person name="Sessa L."/>
            <person name="Sheng Y."/>
            <person name="Shibata Y."/>
            <person name="Shimada H."/>
            <person name="Shimada K."/>
            <person name="Silva D."/>
            <person name="Sinclair B."/>
            <person name="Sperling S."/>
            <person name="Stupka E."/>
            <person name="Sugiura K."/>
            <person name="Sultana R."/>
            <person name="Takenaka Y."/>
            <person name="Taki K."/>
            <person name="Tammoja K."/>
            <person name="Tan S.L."/>
            <person name="Tang S."/>
            <person name="Taylor M.S."/>
            <person name="Tegner J."/>
            <person name="Teichmann S.A."/>
            <person name="Ueda H.R."/>
            <person name="van Nimwegen E."/>
            <person name="Verardo R."/>
            <person name="Wei C.L."/>
            <person name="Yagi K."/>
            <person name="Yamanishi H."/>
            <person name="Zabarovsky E."/>
            <person name="Zhu S."/>
            <person name="Zimmer A."/>
            <person name="Hide W."/>
            <person name="Bult C."/>
            <person name="Grimmond S.M."/>
            <person name="Teasdale R.D."/>
            <person name="Liu E.T."/>
            <person name="Brusic V."/>
            <person name="Quackenbush J."/>
            <person name="Wahlestedt C."/>
            <person name="Mattick J.S."/>
            <person name="Hume D.A."/>
            <person name="Kai C."/>
            <person name="Sasaki D."/>
            <person name="Tomaru Y."/>
            <person name="Fukuda S."/>
            <person name="Kanamori-Katayama M."/>
            <person name="Suzuki M."/>
            <person name="Aoki J."/>
            <person name="Arakawa T."/>
            <person name="Iida J."/>
            <person name="Imamura K."/>
            <person name="Itoh M."/>
            <person name="Kato T."/>
            <person name="Kawaji H."/>
            <person name="Kawagashira N."/>
            <person name="Kawashima T."/>
            <person name="Kojima M."/>
            <person name="Kondo S."/>
            <person name="Konno H."/>
            <person name="Nakano K."/>
            <person name="Ninomiya N."/>
            <person name="Nishio T."/>
            <person name="Okada M."/>
            <person name="Plessy C."/>
            <person name="Shibata K."/>
            <person name="Shiraki T."/>
            <person name="Suzuki S."/>
            <person name="Tagami M."/>
            <person name="Waki K."/>
            <person name="Watahiki A."/>
            <person name="Okamura-Oho Y."/>
            <person name="Suzuki H."/>
            <person name="Kawai J."/>
            <person name="Hayashizaki Y."/>
        </authorList>
    </citation>
    <scope>NUCLEOTIDE SEQUENCE [LARGE SCALE MRNA] (ISOFORMS 1 AND 2)</scope>
    <source>
        <strain>C57BL/6J</strain>
        <tissue>Embryo</tissue>
        <tissue>Lung</tissue>
        <tissue>Medulla oblongata</tissue>
        <tissue>Pancreas</tissue>
        <tissue>Small intestine</tissue>
        <tissue>Testis</tissue>
    </source>
</reference>
<reference key="2">
    <citation type="journal article" date="2004" name="Genome Res.">
        <title>The status, quality, and expansion of the NIH full-length cDNA project: the Mammalian Gene Collection (MGC).</title>
        <authorList>
            <consortium name="The MGC Project Team"/>
        </authorList>
    </citation>
    <scope>NUCLEOTIDE SEQUENCE [LARGE SCALE MRNA] (ISOFORM 1)</scope>
    <source>
        <strain>FVB/N</strain>
        <tissue>Mammary tumor</tissue>
    </source>
</reference>
<reference key="3">
    <citation type="journal article" date="2010" name="Cell">
        <title>A tissue-specific atlas of mouse protein phosphorylation and expression.</title>
        <authorList>
            <person name="Huttlin E.L."/>
            <person name="Jedrychowski M.P."/>
            <person name="Elias J.E."/>
            <person name="Goswami T."/>
            <person name="Rad R."/>
            <person name="Beausoleil S.A."/>
            <person name="Villen J."/>
            <person name="Haas W."/>
            <person name="Sowa M.E."/>
            <person name="Gygi S.P."/>
        </authorList>
    </citation>
    <scope>IDENTIFICATION BY MASS SPECTROMETRY [LARGE SCALE ANALYSIS]</scope>
    <source>
        <tissue>Heart</tissue>
        <tissue>Spleen</tissue>
        <tissue>Testis</tissue>
    </source>
</reference>
<feature type="chain" id="PRO_0000175737" description="L-aminoadipate-semialdehyde dehydrogenase-phosphopantetheinyl transferase">
    <location>
        <begin position="1"/>
        <end position="309"/>
    </location>
</feature>
<feature type="binding site" evidence="1">
    <location>
        <position position="47"/>
    </location>
    <ligand>
        <name>CoA</name>
        <dbReference type="ChEBI" id="CHEBI:57287"/>
    </ligand>
</feature>
<feature type="binding site" evidence="1">
    <location>
        <begin position="86"/>
        <end position="91"/>
    </location>
    <ligand>
        <name>CoA</name>
        <dbReference type="ChEBI" id="CHEBI:57287"/>
    </ligand>
</feature>
<feature type="binding site" evidence="1">
    <location>
        <begin position="108"/>
        <end position="111"/>
    </location>
    <ligand>
        <name>CoA</name>
        <dbReference type="ChEBI" id="CHEBI:57287"/>
    </ligand>
</feature>
<feature type="binding site" evidence="1">
    <location>
        <position position="129"/>
    </location>
    <ligand>
        <name>Mg(2+)</name>
        <dbReference type="ChEBI" id="CHEBI:18420"/>
    </ligand>
</feature>
<feature type="binding site" evidence="1">
    <location>
        <begin position="181"/>
        <end position="185"/>
    </location>
    <ligand>
        <name>CoA</name>
        <dbReference type="ChEBI" id="CHEBI:57287"/>
    </ligand>
</feature>
<feature type="binding site" evidence="1">
    <location>
        <position position="181"/>
    </location>
    <ligand>
        <name>Mg(2+)</name>
        <dbReference type="ChEBI" id="CHEBI:18420"/>
    </ligand>
</feature>
<feature type="splice variant" id="VSP_016096" description="In isoform 2." evidence="2">
    <location>
        <begin position="124"/>
        <end position="177"/>
    </location>
</feature>
<feature type="sequence conflict" description="In Ref. 2; AAH38013." evidence="3" ref="2">
    <original>E</original>
    <variation>G</variation>
    <location>
        <position position="32"/>
    </location>
</feature>
<feature type="sequence conflict" description="In Ref. 1; BAB25740." evidence="3" ref="1">
    <original>S</original>
    <variation>F</variation>
    <location>
        <position position="262"/>
    </location>
</feature>
<organism>
    <name type="scientific">Mus musculus</name>
    <name type="common">Mouse</name>
    <dbReference type="NCBI Taxonomy" id="10090"/>
    <lineage>
        <taxon>Eukaryota</taxon>
        <taxon>Metazoa</taxon>
        <taxon>Chordata</taxon>
        <taxon>Craniata</taxon>
        <taxon>Vertebrata</taxon>
        <taxon>Euteleostomi</taxon>
        <taxon>Mammalia</taxon>
        <taxon>Eutheria</taxon>
        <taxon>Euarchontoglires</taxon>
        <taxon>Glires</taxon>
        <taxon>Rodentia</taxon>
        <taxon>Myomorpha</taxon>
        <taxon>Muroidea</taxon>
        <taxon>Muridae</taxon>
        <taxon>Murinae</taxon>
        <taxon>Mus</taxon>
        <taxon>Mus</taxon>
    </lineage>
</organism>
<dbReference type="EC" id="2.7.8.7" evidence="1"/>
<dbReference type="EMBL" id="AK007737">
    <property type="protein sequence ID" value="BAB25224.1"/>
    <property type="molecule type" value="mRNA"/>
</dbReference>
<dbReference type="EMBL" id="AK008554">
    <property type="protein sequence ID" value="BAB25740.1"/>
    <property type="molecule type" value="mRNA"/>
</dbReference>
<dbReference type="EMBL" id="AK010557">
    <property type="protein sequence ID" value="BAB27026.1"/>
    <property type="molecule type" value="mRNA"/>
</dbReference>
<dbReference type="EMBL" id="AK013111">
    <property type="protein sequence ID" value="BAB28656.1"/>
    <property type="molecule type" value="mRNA"/>
</dbReference>
<dbReference type="EMBL" id="AK018191">
    <property type="protein sequence ID" value="BAB31116.1"/>
    <property type="molecule type" value="mRNA"/>
</dbReference>
<dbReference type="EMBL" id="AK076099">
    <property type="protein sequence ID" value="BAC36182.1"/>
    <property type="molecule type" value="mRNA"/>
</dbReference>
<dbReference type="EMBL" id="AK076866">
    <property type="protein sequence ID" value="BAC36512.1"/>
    <property type="molecule type" value="mRNA"/>
</dbReference>
<dbReference type="EMBL" id="AK144671">
    <property type="protein sequence ID" value="BAE26000.1"/>
    <property type="molecule type" value="mRNA"/>
</dbReference>
<dbReference type="EMBL" id="BC038013">
    <property type="protein sequence ID" value="AAH38013.1"/>
    <property type="molecule type" value="mRNA"/>
</dbReference>
<dbReference type="EMBL" id="BC049851">
    <property type="protein sequence ID" value="AAH49851.1"/>
    <property type="molecule type" value="mRNA"/>
</dbReference>
<dbReference type="CCDS" id="CCDS22794.1">
    <molecule id="Q9CQF6-1"/>
</dbReference>
<dbReference type="RefSeq" id="NP_001313288.1">
    <molecule id="Q9CQF6-2"/>
    <property type="nucleotide sequence ID" value="NM_001326359.1"/>
</dbReference>
<dbReference type="RefSeq" id="NP_080552.3">
    <molecule id="Q9CQF6-1"/>
    <property type="nucleotide sequence ID" value="NM_026276.3"/>
</dbReference>
<dbReference type="SMR" id="Q9CQF6"/>
<dbReference type="BioGRID" id="212313">
    <property type="interactions" value="7"/>
</dbReference>
<dbReference type="FunCoup" id="Q9CQF6">
    <property type="interactions" value="1278"/>
</dbReference>
<dbReference type="STRING" id="10090.ENSMUSP00000053971"/>
<dbReference type="iPTMnet" id="Q9CQF6"/>
<dbReference type="PhosphoSitePlus" id="Q9CQF6"/>
<dbReference type="SwissPalm" id="Q9CQF6"/>
<dbReference type="PaxDb" id="10090-ENSMUSP00000053971"/>
<dbReference type="PeptideAtlas" id="Q9CQF6"/>
<dbReference type="ProteomicsDB" id="281939">
    <molecule id="Q9CQF6-1"/>
</dbReference>
<dbReference type="ProteomicsDB" id="281940">
    <molecule id="Q9CQF6-2"/>
</dbReference>
<dbReference type="Pumba" id="Q9CQF6"/>
<dbReference type="Antibodypedia" id="18138">
    <property type="antibodies" value="212 antibodies from 26 providers"/>
</dbReference>
<dbReference type="DNASU" id="67618"/>
<dbReference type="Ensembl" id="ENSMUST00000051589.9">
    <molecule id="Q9CQF6-1"/>
    <property type="protein sequence ID" value="ENSMUSP00000053971.8"/>
    <property type="gene ID" value="ENSMUSG00000025894.12"/>
</dbReference>
<dbReference type="GeneID" id="67618"/>
<dbReference type="KEGG" id="mmu:67618"/>
<dbReference type="UCSC" id="uc009obe.2">
    <molecule id="Q9CQF6-1"/>
    <property type="organism name" value="mouse"/>
</dbReference>
<dbReference type="UCSC" id="uc009obf.2">
    <molecule id="Q9CQF6-2"/>
    <property type="organism name" value="mouse"/>
</dbReference>
<dbReference type="AGR" id="MGI:1914868"/>
<dbReference type="CTD" id="60496"/>
<dbReference type="MGI" id="MGI:1914868">
    <property type="gene designation" value="Aasdhppt"/>
</dbReference>
<dbReference type="VEuPathDB" id="HostDB:ENSMUSG00000025894"/>
<dbReference type="eggNOG" id="KOG0945">
    <property type="taxonomic scope" value="Eukaryota"/>
</dbReference>
<dbReference type="GeneTree" id="ENSGT00390000004663"/>
<dbReference type="HOGENOM" id="CLU_057011_3_0_1"/>
<dbReference type="InParanoid" id="Q9CQF6"/>
<dbReference type="OMA" id="WVFEESL"/>
<dbReference type="OrthoDB" id="26719at2759"/>
<dbReference type="PhylomeDB" id="Q9CQF6"/>
<dbReference type="TreeFam" id="TF313753"/>
<dbReference type="Reactome" id="R-MMU-199220">
    <property type="pathway name" value="Vitamin B5 (pantothenate) metabolism"/>
</dbReference>
<dbReference type="BioGRID-ORCS" id="67618">
    <property type="hits" value="24 hits in 77 CRISPR screens"/>
</dbReference>
<dbReference type="ChiTaRS" id="Aasdhppt">
    <property type="organism name" value="mouse"/>
</dbReference>
<dbReference type="PRO" id="PR:Q9CQF6"/>
<dbReference type="Proteomes" id="UP000000589">
    <property type="component" value="Chromosome 9"/>
</dbReference>
<dbReference type="RNAct" id="Q9CQF6">
    <property type="molecule type" value="protein"/>
</dbReference>
<dbReference type="Bgee" id="ENSMUSG00000025894">
    <property type="expression patterns" value="Expressed in manus and 229 other cell types or tissues"/>
</dbReference>
<dbReference type="ExpressionAtlas" id="Q9CQF6">
    <property type="expression patterns" value="baseline and differential"/>
</dbReference>
<dbReference type="GO" id="GO:0005829">
    <property type="term" value="C:cytosol"/>
    <property type="evidence" value="ECO:0000250"/>
    <property type="project" value="UniProtKB"/>
</dbReference>
<dbReference type="GO" id="GO:0008897">
    <property type="term" value="F:holo-[acyl-carrier-protein] synthase activity"/>
    <property type="evidence" value="ECO:0000250"/>
    <property type="project" value="UniProtKB"/>
</dbReference>
<dbReference type="GO" id="GO:0000287">
    <property type="term" value="F:magnesium ion binding"/>
    <property type="evidence" value="ECO:0000250"/>
    <property type="project" value="UniProtKB"/>
</dbReference>
<dbReference type="GO" id="GO:0009258">
    <property type="term" value="P:10-formyltetrahydrofolate catabolic process"/>
    <property type="evidence" value="ECO:0007669"/>
    <property type="project" value="Ensembl"/>
</dbReference>
<dbReference type="GO" id="GO:0051604">
    <property type="term" value="P:protein maturation"/>
    <property type="evidence" value="ECO:0000250"/>
    <property type="project" value="UniProtKB"/>
</dbReference>
<dbReference type="FunFam" id="3.90.470.20:FF:000006">
    <property type="entry name" value="L-aminoadipate-semialdehyde dehydrogenase-phosphopantetheinyl transferase"/>
    <property type="match status" value="1"/>
</dbReference>
<dbReference type="Gene3D" id="3.90.470.20">
    <property type="entry name" value="4'-phosphopantetheinyl transferase domain"/>
    <property type="match status" value="2"/>
</dbReference>
<dbReference type="InterPro" id="IPR008278">
    <property type="entry name" value="4-PPantetheinyl_Trfase_dom"/>
</dbReference>
<dbReference type="InterPro" id="IPR037143">
    <property type="entry name" value="4-PPantetheinyl_Trfase_dom_sf"/>
</dbReference>
<dbReference type="InterPro" id="IPR055066">
    <property type="entry name" value="AASDHPPT_N"/>
</dbReference>
<dbReference type="InterPro" id="IPR050559">
    <property type="entry name" value="P-Pant_transferase_sf"/>
</dbReference>
<dbReference type="PANTHER" id="PTHR12215:SF10">
    <property type="entry name" value="L-AMINOADIPATE-SEMIALDEHYDE DEHYDROGENASE-PHOSPHOPANTETHEINYL TRANSFERASE"/>
    <property type="match status" value="1"/>
</dbReference>
<dbReference type="PANTHER" id="PTHR12215">
    <property type="entry name" value="PHOSPHOPANTETHEINE TRANSFERASE"/>
    <property type="match status" value="1"/>
</dbReference>
<dbReference type="Pfam" id="PF22624">
    <property type="entry name" value="AASDHPPT_N"/>
    <property type="match status" value="1"/>
</dbReference>
<dbReference type="Pfam" id="PF01648">
    <property type="entry name" value="ACPS"/>
    <property type="match status" value="1"/>
</dbReference>
<dbReference type="SUPFAM" id="SSF56214">
    <property type="entry name" value="4'-phosphopantetheinyl transferase"/>
    <property type="match status" value="2"/>
</dbReference>
<comment type="function">
    <text evidence="1">Catalyzes the post-translational modification of target proteins by phosphopantetheine. Can transfer the 4'-phosphopantetheine moiety from coenzyme A, regardless of whether the CoA is presented in the free thiol form or as an acetyl thioester, to a serine residue of a broad range of acceptors including the acyl carrier domain of FASN.</text>
</comment>
<comment type="catalytic activity">
    <reaction evidence="1">
        <text>apo-[ACP] + CoA = holo-[ACP] + adenosine 3',5'-bisphosphate + H(+)</text>
        <dbReference type="Rhea" id="RHEA:12068"/>
        <dbReference type="Rhea" id="RHEA-COMP:9685"/>
        <dbReference type="Rhea" id="RHEA-COMP:9690"/>
        <dbReference type="ChEBI" id="CHEBI:15378"/>
        <dbReference type="ChEBI" id="CHEBI:29999"/>
        <dbReference type="ChEBI" id="CHEBI:57287"/>
        <dbReference type="ChEBI" id="CHEBI:58343"/>
        <dbReference type="ChEBI" id="CHEBI:64479"/>
        <dbReference type="EC" id="2.7.8.7"/>
    </reaction>
    <physiologicalReaction direction="left-to-right" evidence="1">
        <dbReference type="Rhea" id="RHEA:12069"/>
    </physiologicalReaction>
</comment>
<comment type="catalytic activity">
    <reaction evidence="1">
        <text>apo-[ACP] + acetyl-CoA = acetyl-[ACP] + adenosine 3',5'-bisphosphate + H(+)</text>
        <dbReference type="Rhea" id="RHEA:46564"/>
        <dbReference type="Rhea" id="RHEA-COMP:9621"/>
        <dbReference type="Rhea" id="RHEA-COMP:9690"/>
        <dbReference type="ChEBI" id="CHEBI:15378"/>
        <dbReference type="ChEBI" id="CHEBI:29999"/>
        <dbReference type="ChEBI" id="CHEBI:57288"/>
        <dbReference type="ChEBI" id="CHEBI:58343"/>
        <dbReference type="ChEBI" id="CHEBI:78446"/>
    </reaction>
    <physiologicalReaction direction="left-to-right" evidence="1">
        <dbReference type="Rhea" id="RHEA:46565"/>
    </physiologicalReaction>
</comment>
<comment type="cofactor">
    <cofactor evidence="1">
        <name>Mg(2+)</name>
        <dbReference type="ChEBI" id="CHEBI:18420"/>
    </cofactor>
    <text evidence="1">Binds 1 Mg(2+) ion.</text>
</comment>
<comment type="subunit">
    <text evidence="1">Monomer.</text>
</comment>
<comment type="subcellular location">
    <subcellularLocation>
        <location evidence="1">Cytoplasm</location>
        <location evidence="1">Cytosol</location>
    </subcellularLocation>
</comment>
<comment type="alternative products">
    <event type="alternative splicing"/>
    <isoform>
        <id>Q9CQF6-1</id>
        <name>1</name>
        <sequence type="displayed"/>
    </isoform>
    <isoform>
        <id>Q9CQF6-2</id>
        <name>2</name>
        <sequence type="described" ref="VSP_016096"/>
    </isoform>
</comment>
<comment type="similarity">
    <text evidence="3">Belongs to the P-Pant transferase superfamily. AcpS family.</text>
</comment>
<gene>
    <name type="primary">Aasdhppt</name>
</gene>
<evidence type="ECO:0000250" key="1">
    <source>
        <dbReference type="UniProtKB" id="Q9NRN7"/>
    </source>
</evidence>
<evidence type="ECO:0000303" key="2">
    <source>
    </source>
</evidence>
<evidence type="ECO:0000305" key="3"/>
<proteinExistence type="evidence at protein level"/>
<name>ADPPT_MOUSE</name>
<accession>Q9CQF6</accession>
<accession>Q5U5W8</accession>
<accession>Q9CU40</accession>
<accession>Q9D827</accession>
<sequence length="309" mass="35764">MVFPAKRLCVVPSMEGVRWAFSCGTWLPSRAEWLLAMRSIQPEEKERIGKFVFARDAKAALAGRLMIRKLVAEKLNIPWDHIRLQRTSKGKPVLAKDSLNPYPNFNFNISHQGDYAVLAAEPEVQVGIDIMKTSFPGRGSIPEFFHIMKRKFTKKEWETIRSFNDEWTQLDMFYRHWALKESFIKAIGVGLGFEMQRLEFDVSPLNMDIGQVYKETCLILDGEEEKEWAFEESKIDEHHFVAVAVRKPDGSRHQNVSYQDDSKLSQRKFTILNFNDLVASAIPMTPEDPSFWDCFCFTEEILIRNGTKS</sequence>
<keyword id="KW-0025">Alternative splicing</keyword>
<keyword id="KW-0963">Cytoplasm</keyword>
<keyword id="KW-0460">Magnesium</keyword>
<keyword id="KW-0479">Metal-binding</keyword>
<keyword id="KW-1185">Reference proteome</keyword>
<keyword id="KW-0808">Transferase</keyword>
<protein>
    <recommendedName>
        <fullName>L-aminoadipate-semialdehyde dehydrogenase-phosphopantetheinyl transferase</fullName>
        <ecNumber evidence="1">2.7.8.7</ecNumber>
    </recommendedName>
    <alternativeName>
        <fullName>4'-phosphopantetheinyl transferase</fullName>
    </alternativeName>
    <alternativeName>
        <fullName>Alpha-aminoadipic semialdehyde dehydrogenase-phosphopantetheinyl transferase</fullName>
        <shortName>AASD-PPT</shortName>
    </alternativeName>
</protein>